<comment type="subcellular location">
    <subcellularLocation>
        <location evidence="2">Membrane</location>
        <topology evidence="2">Single-pass membrane protein</topology>
    </subcellularLocation>
</comment>
<comment type="similarity">
    <text evidence="2">Belongs to the nanovirus U4 protein family.</text>
</comment>
<comment type="caution">
    <text evidence="2">It is uncertain whether Met-1 or Met-24 is the initiator.</text>
</comment>
<gene>
    <name type="primary">DNA-U4</name>
    <name type="synonym">C12</name>
</gene>
<sequence>MEVRFLLFLLLLVLVINPSLVVNMVFGYMFGLLLRNNYSRLKAMIRSNQTEEEEERHEAVDVSNPFEDVDIDVMQHLKTLGLDSKVDEEDVEYFRRFWQSMLRNK</sequence>
<reference key="1">
    <citation type="journal article" date="2006" name="J. Gen. Virol.">
        <title>Infectivity of nanovirus DNAs: induction of disease by cloned genome components of Faba bean necrotic yellows virus.</title>
        <authorList>
            <person name="Timchenko T."/>
            <person name="Katul L."/>
            <person name="Aronson M."/>
            <person name="Vega-Arreguin J.C."/>
            <person name="Ramirez B.C."/>
            <person name="Vetten H.J."/>
            <person name="Gronenborn B."/>
        </authorList>
    </citation>
    <scope>NUCLEOTIDE SEQUENCE [GENOMIC DNA]</scope>
</reference>
<feature type="chain" id="PRO_0000378546" description="Protein U4">
    <location>
        <begin position="1"/>
        <end position="105"/>
    </location>
</feature>
<feature type="transmembrane region" description="Helical" evidence="1">
    <location>
        <begin position="5"/>
        <end position="25"/>
    </location>
</feature>
<keyword id="KW-0472">Membrane</keyword>
<keyword id="KW-1185">Reference proteome</keyword>
<keyword id="KW-0812">Transmembrane</keyword>
<keyword id="KW-1133">Transmembrane helix</keyword>
<accession>Q2L4I7</accession>
<accession>Q2L4I6</accession>
<proteinExistence type="inferred from homology"/>
<evidence type="ECO:0000255" key="1"/>
<evidence type="ECO:0000305" key="2"/>
<organism>
    <name type="scientific">Faba bean necrotic yellows virus (isolate Egyptian EV1-93)</name>
    <name type="common">FBNYV</name>
    <dbReference type="NCBI Taxonomy" id="291603"/>
    <lineage>
        <taxon>Viruses</taxon>
        <taxon>Monodnaviria</taxon>
        <taxon>Shotokuvirae</taxon>
        <taxon>Cressdnaviricota</taxon>
        <taxon>Arfiviricetes</taxon>
        <taxon>Mulpavirales</taxon>
        <taxon>Nanoviridae</taxon>
        <taxon>Nanovirus</taxon>
        <taxon>Faba bean necrotic yellows virus</taxon>
    </lineage>
</organism>
<organismHost>
    <name type="scientific">Cicer arietinum</name>
    <name type="common">Chickpea</name>
    <name type="synonym">Garbanzo</name>
    <dbReference type="NCBI Taxonomy" id="3827"/>
</organismHost>
<organismHost>
    <name type="scientific">Lens culinaris</name>
    <name type="common">Lentil</name>
    <name type="synonym">Cicer lens</name>
    <dbReference type="NCBI Taxonomy" id="3864"/>
</organismHost>
<organismHost>
    <name type="scientific">Phaseolus vulgaris</name>
    <name type="common">Kidney bean</name>
    <name type="synonym">French bean</name>
    <dbReference type="NCBI Taxonomy" id="3885"/>
</organismHost>
<organismHost>
    <name type="scientific">Vicia faba</name>
    <name type="common">Broad bean</name>
    <name type="synonym">Faba vulgaris</name>
    <dbReference type="NCBI Taxonomy" id="3906"/>
</organismHost>
<dbReference type="EMBL" id="AJ749902">
    <property type="protein sequence ID" value="CAG77486.1"/>
    <property type="molecule type" value="Genomic_DNA"/>
</dbReference>
<dbReference type="EMBL" id="AJ749902">
    <property type="protein sequence ID" value="CAG77487.1"/>
    <property type="molecule type" value="Genomic_DNA"/>
</dbReference>
<dbReference type="KEGG" id="vg:19793146"/>
<dbReference type="Proteomes" id="UP001508024">
    <property type="component" value="Genome"/>
</dbReference>
<dbReference type="GO" id="GO:0016020">
    <property type="term" value="C:membrane"/>
    <property type="evidence" value="ECO:0007669"/>
    <property type="project" value="UniProtKB-SubCell"/>
</dbReference>
<protein>
    <recommendedName>
        <fullName>Protein U4</fullName>
    </recommendedName>
</protein>
<name>U4_FBNY1</name>